<sequence length="268" mass="28672">MERYENLFAQLNDRREGAFVPFVTLGDPGIEQSLKIIDTLIDAGADALELGVPFSDPLADGPTIQNANLRAFAAGVTPAQCFEMLALIREKHPTIPIGLLMYANLVFNNGIDAFYARCEQVGVDSVLVADVPVEESAPFRQAALRHNIAPIFICPPNADDDLLRQVASYGRGYTYLLSRSGVTGAENRGALPLHHLIEKLKEYHAAPALQGFGISSPEQVSAAVRAGAAGAISGSAIVKIIEKNLASPEQMLAELRSFVSAMKAASRA</sequence>
<comment type="function">
    <text evidence="1">The alpha subunit is responsible for the aldol cleavage of indoleglycerol phosphate to indole and glyceraldehyde 3-phosphate.</text>
</comment>
<comment type="catalytic activity">
    <reaction evidence="1">
        <text>(1S,2R)-1-C-(indol-3-yl)glycerol 3-phosphate + L-serine = D-glyceraldehyde 3-phosphate + L-tryptophan + H2O</text>
        <dbReference type="Rhea" id="RHEA:10532"/>
        <dbReference type="ChEBI" id="CHEBI:15377"/>
        <dbReference type="ChEBI" id="CHEBI:33384"/>
        <dbReference type="ChEBI" id="CHEBI:57912"/>
        <dbReference type="ChEBI" id="CHEBI:58866"/>
        <dbReference type="ChEBI" id="CHEBI:59776"/>
        <dbReference type="EC" id="4.2.1.20"/>
    </reaction>
</comment>
<comment type="pathway">
    <text evidence="1">Amino-acid biosynthesis; L-tryptophan biosynthesis; L-tryptophan from chorismate: step 5/5.</text>
</comment>
<comment type="subunit">
    <text evidence="1">Tetramer of two alpha and two beta chains.</text>
</comment>
<comment type="similarity">
    <text evidence="1">Belongs to the TrpA family.</text>
</comment>
<gene>
    <name evidence="1" type="primary">trpA</name>
    <name type="ordered locus">SPAB_01518</name>
</gene>
<feature type="chain" id="PRO_1000076367" description="Tryptophan synthase alpha chain">
    <location>
        <begin position="1"/>
        <end position="268"/>
    </location>
</feature>
<feature type="active site" description="Proton acceptor" evidence="1">
    <location>
        <position position="49"/>
    </location>
</feature>
<feature type="active site" description="Proton acceptor" evidence="1">
    <location>
        <position position="60"/>
    </location>
</feature>
<keyword id="KW-0028">Amino-acid biosynthesis</keyword>
<keyword id="KW-0057">Aromatic amino acid biosynthesis</keyword>
<keyword id="KW-0456">Lyase</keyword>
<keyword id="KW-0822">Tryptophan biosynthesis</keyword>
<name>TRPA_SALPB</name>
<reference key="1">
    <citation type="submission" date="2007-11" db="EMBL/GenBank/DDBJ databases">
        <authorList>
            <consortium name="The Salmonella enterica serovar Paratyphi B Genome Sequencing Project"/>
            <person name="McClelland M."/>
            <person name="Sanderson E.K."/>
            <person name="Porwollik S."/>
            <person name="Spieth J."/>
            <person name="Clifton W.S."/>
            <person name="Fulton R."/>
            <person name="Cordes M."/>
            <person name="Wollam A."/>
            <person name="Shah N."/>
            <person name="Pepin K."/>
            <person name="Bhonagiri V."/>
            <person name="Nash W."/>
            <person name="Johnson M."/>
            <person name="Thiruvilangam P."/>
            <person name="Wilson R."/>
        </authorList>
    </citation>
    <scope>NUCLEOTIDE SEQUENCE [LARGE SCALE GENOMIC DNA]</scope>
    <source>
        <strain>ATCC BAA-1250 / SPB7</strain>
    </source>
</reference>
<evidence type="ECO:0000255" key="1">
    <source>
        <dbReference type="HAMAP-Rule" id="MF_00131"/>
    </source>
</evidence>
<proteinExistence type="inferred from homology"/>
<organism>
    <name type="scientific">Salmonella paratyphi B (strain ATCC BAA-1250 / SPB7)</name>
    <dbReference type="NCBI Taxonomy" id="1016998"/>
    <lineage>
        <taxon>Bacteria</taxon>
        <taxon>Pseudomonadati</taxon>
        <taxon>Pseudomonadota</taxon>
        <taxon>Gammaproteobacteria</taxon>
        <taxon>Enterobacterales</taxon>
        <taxon>Enterobacteriaceae</taxon>
        <taxon>Salmonella</taxon>
    </lineage>
</organism>
<dbReference type="EC" id="4.2.1.20" evidence="1"/>
<dbReference type="EMBL" id="CP000886">
    <property type="protein sequence ID" value="ABX66916.1"/>
    <property type="molecule type" value="Genomic_DNA"/>
</dbReference>
<dbReference type="RefSeq" id="WP_000443029.1">
    <property type="nucleotide sequence ID" value="NC_010102.1"/>
</dbReference>
<dbReference type="SMR" id="A9MWR3"/>
<dbReference type="KEGG" id="spq:SPAB_01518"/>
<dbReference type="PATRIC" id="fig|1016998.12.peg.1425"/>
<dbReference type="HOGENOM" id="CLU_016734_0_4_6"/>
<dbReference type="BioCyc" id="SENT1016998:SPAB_RS06175-MONOMER"/>
<dbReference type="UniPathway" id="UPA00035">
    <property type="reaction ID" value="UER00044"/>
</dbReference>
<dbReference type="Proteomes" id="UP000008556">
    <property type="component" value="Chromosome"/>
</dbReference>
<dbReference type="GO" id="GO:0005829">
    <property type="term" value="C:cytosol"/>
    <property type="evidence" value="ECO:0007669"/>
    <property type="project" value="TreeGrafter"/>
</dbReference>
<dbReference type="GO" id="GO:0004834">
    <property type="term" value="F:tryptophan synthase activity"/>
    <property type="evidence" value="ECO:0007669"/>
    <property type="project" value="UniProtKB-UniRule"/>
</dbReference>
<dbReference type="CDD" id="cd04724">
    <property type="entry name" value="Tryptophan_synthase_alpha"/>
    <property type="match status" value="1"/>
</dbReference>
<dbReference type="FunFam" id="3.20.20.70:FF:000037">
    <property type="entry name" value="Tryptophan synthase alpha chain"/>
    <property type="match status" value="1"/>
</dbReference>
<dbReference type="Gene3D" id="3.20.20.70">
    <property type="entry name" value="Aldolase class I"/>
    <property type="match status" value="1"/>
</dbReference>
<dbReference type="HAMAP" id="MF_00131">
    <property type="entry name" value="Trp_synth_alpha"/>
    <property type="match status" value="1"/>
</dbReference>
<dbReference type="InterPro" id="IPR013785">
    <property type="entry name" value="Aldolase_TIM"/>
</dbReference>
<dbReference type="InterPro" id="IPR011060">
    <property type="entry name" value="RibuloseP-bd_barrel"/>
</dbReference>
<dbReference type="InterPro" id="IPR018204">
    <property type="entry name" value="Trp_synthase_alpha_AS"/>
</dbReference>
<dbReference type="InterPro" id="IPR002028">
    <property type="entry name" value="Trp_synthase_suA"/>
</dbReference>
<dbReference type="NCBIfam" id="TIGR00262">
    <property type="entry name" value="trpA"/>
    <property type="match status" value="1"/>
</dbReference>
<dbReference type="PANTHER" id="PTHR43406:SF1">
    <property type="entry name" value="TRYPTOPHAN SYNTHASE ALPHA CHAIN, CHLOROPLASTIC"/>
    <property type="match status" value="1"/>
</dbReference>
<dbReference type="PANTHER" id="PTHR43406">
    <property type="entry name" value="TRYPTOPHAN SYNTHASE, ALPHA CHAIN"/>
    <property type="match status" value="1"/>
</dbReference>
<dbReference type="Pfam" id="PF00290">
    <property type="entry name" value="Trp_syntA"/>
    <property type="match status" value="1"/>
</dbReference>
<dbReference type="SUPFAM" id="SSF51366">
    <property type="entry name" value="Ribulose-phoshate binding barrel"/>
    <property type="match status" value="1"/>
</dbReference>
<dbReference type="PROSITE" id="PS00167">
    <property type="entry name" value="TRP_SYNTHASE_ALPHA"/>
    <property type="match status" value="1"/>
</dbReference>
<protein>
    <recommendedName>
        <fullName evidence="1">Tryptophan synthase alpha chain</fullName>
        <ecNumber evidence="1">4.2.1.20</ecNumber>
    </recommendedName>
</protein>
<accession>A9MWR3</accession>